<accession>Q9N2I9</accession>
<accession>Q9TTS9</accession>
<comment type="function">
    <text evidence="2">Putative transmembrane transporter that plays a role in mitochondrial metabolism via an as yet unclear mechanism. Originally, this mitochondrial protein was thought to act as a proton transmembrane transporter from the mitochondrial intermembrane space into the matrix, causing proton leaks through the inner mitochondrial membrane, thereby uncoupling mitochondrial membrane potential generation from ATP synthesis. However, this function is controversial and uncoupling may not be the function, or at least not the main function, but rather a consequence of more conventional metabolite transporter activity.</text>
</comment>
<comment type="subunit">
    <text evidence="2">Interacts with HAX1; the interaction is direct and calcium-dependent.</text>
</comment>
<comment type="subcellular location">
    <subcellularLocation>
        <location evidence="3">Mitochondrion inner membrane</location>
        <topology evidence="4">Multi-pass membrane protein</topology>
    </subcellularLocation>
</comment>
<comment type="similarity">
    <text evidence="6">Belongs to the mitochondrial carrier (TC 2.A.29) family.</text>
</comment>
<feature type="chain" id="PRO_0000090671" description="Putative mitochondrial transporter UCP3">
    <location>
        <begin position="1"/>
        <end position="311"/>
    </location>
</feature>
<feature type="topological domain" description="Mitochondrial intermembrane" evidence="3">
    <location>
        <begin position="1"/>
        <end position="10"/>
    </location>
</feature>
<feature type="transmembrane region" description="Helical; Name=1" evidence="4">
    <location>
        <begin position="11"/>
        <end position="32"/>
    </location>
</feature>
<feature type="topological domain" description="Mitochondrial matrix" evidence="3">
    <location>
        <begin position="33"/>
        <end position="76"/>
    </location>
</feature>
<feature type="transmembrane region" description="Helical; Name=2" evidence="4">
    <location>
        <begin position="77"/>
        <end position="99"/>
    </location>
</feature>
<feature type="topological domain" description="Mitochondrial intermembrane" evidence="3">
    <location>
        <begin position="100"/>
        <end position="119"/>
    </location>
</feature>
<feature type="transmembrane region" description="Helical; Name=3" evidence="4">
    <location>
        <begin position="120"/>
        <end position="136"/>
    </location>
</feature>
<feature type="topological domain" description="Mitochondrial matrix" evidence="3">
    <location>
        <begin position="137"/>
        <end position="182"/>
    </location>
</feature>
<feature type="transmembrane region" description="Helical; Name=4" evidence="4">
    <location>
        <begin position="183"/>
        <end position="199"/>
    </location>
</feature>
<feature type="topological domain" description="Mitochondrial intermembrane" evidence="3">
    <location>
        <begin position="200"/>
        <end position="216"/>
    </location>
</feature>
<feature type="transmembrane region" description="Helical; Name=5" evidence="4">
    <location>
        <begin position="217"/>
        <end position="236"/>
    </location>
</feature>
<feature type="topological domain" description="Mitochondrial matrix" evidence="3">
    <location>
        <begin position="237"/>
        <end position="270"/>
    </location>
</feature>
<feature type="transmembrane region" description="Helical; Name=6" evidence="4">
    <location>
        <begin position="271"/>
        <end position="293"/>
    </location>
</feature>
<feature type="topological domain" description="Mitochondrial intermembrane" evidence="3">
    <location>
        <begin position="294"/>
        <end position="311"/>
    </location>
</feature>
<feature type="repeat" description="Solcar 1">
    <location>
        <begin position="11"/>
        <end position="105"/>
    </location>
</feature>
<feature type="repeat" description="Solcar 2">
    <location>
        <begin position="114"/>
        <end position="205"/>
    </location>
</feature>
<feature type="repeat" description="Solcar 3">
    <location>
        <begin position="214"/>
        <end position="299"/>
    </location>
</feature>
<feature type="region of interest" description="Purine nucleotide binding" evidence="1">
    <location>
        <begin position="278"/>
        <end position="300"/>
    </location>
</feature>
<feature type="sequence conflict" description="In Ref. 2; AAF08310." evidence="6" ref="2">
    <original>A</original>
    <variation>G</variation>
    <location>
        <position position="14"/>
    </location>
</feature>
<organism>
    <name type="scientific">Canis lupus familiaris</name>
    <name type="common">Dog</name>
    <name type="synonym">Canis familiaris</name>
    <dbReference type="NCBI Taxonomy" id="9615"/>
    <lineage>
        <taxon>Eukaryota</taxon>
        <taxon>Metazoa</taxon>
        <taxon>Chordata</taxon>
        <taxon>Craniata</taxon>
        <taxon>Vertebrata</taxon>
        <taxon>Euteleostomi</taxon>
        <taxon>Mammalia</taxon>
        <taxon>Eutheria</taxon>
        <taxon>Laurasiatheria</taxon>
        <taxon>Carnivora</taxon>
        <taxon>Caniformia</taxon>
        <taxon>Canidae</taxon>
        <taxon>Canis</taxon>
    </lineage>
</organism>
<proteinExistence type="evidence at transcript level"/>
<protein>
    <recommendedName>
        <fullName evidence="6">Putative mitochondrial transporter UCP3</fullName>
    </recommendedName>
    <alternativeName>
        <fullName>Solute carrier family 25 member 9</fullName>
    </alternativeName>
    <alternativeName>
        <fullName evidence="5">Uncoupling protein 3</fullName>
        <shortName>UCP 3</shortName>
    </alternativeName>
</protein>
<keyword id="KW-0472">Membrane</keyword>
<keyword id="KW-0496">Mitochondrion</keyword>
<keyword id="KW-0999">Mitochondrion inner membrane</keyword>
<keyword id="KW-1185">Reference proteome</keyword>
<keyword id="KW-0677">Repeat</keyword>
<keyword id="KW-0812">Transmembrane</keyword>
<keyword id="KW-1133">Transmembrane helix</keyword>
<keyword id="KW-0813">Transport</keyword>
<evidence type="ECO:0000250" key="1"/>
<evidence type="ECO:0000250" key="2">
    <source>
        <dbReference type="UniProtKB" id="P55916"/>
    </source>
</evidence>
<evidence type="ECO:0000250" key="3">
    <source>
        <dbReference type="UniProtKB" id="P56501"/>
    </source>
</evidence>
<evidence type="ECO:0000255" key="4"/>
<evidence type="ECO:0000303" key="5">
    <source>
    </source>
</evidence>
<evidence type="ECO:0000305" key="6"/>
<reference key="1">
    <citation type="journal article" date="2002" name="Comp. Biochem. Physiol.">
        <title>Canine mitochondrial uncoupling proteins: structure and mRNA expression of three isoforms in adult beagles.</title>
        <authorList>
            <person name="Ishioka K."/>
            <person name="Kanehira K."/>
            <person name="Sasaki N."/>
            <person name="Kitamura H."/>
            <person name="Kimura K."/>
            <person name="Saito M."/>
        </authorList>
    </citation>
    <scope>NUCLEOTIDE SEQUENCE [MRNA]</scope>
    <source>
        <strain>Beagle</strain>
    </source>
</reference>
<reference key="2">
    <citation type="submission" date="1999-11" db="EMBL/GenBank/DDBJ databases">
        <authorList>
            <person name="Thompson G.M."/>
            <person name="Kelly L.J."/>
            <person name="Candelore M.R."/>
        </authorList>
    </citation>
    <scope>NUCLEOTIDE SEQUENCE [MRNA] OF 14-146</scope>
</reference>
<gene>
    <name evidence="5" type="primary">UCP3</name>
    <name type="synonym">SLC25A9</name>
</gene>
<name>UCP3_CANLF</name>
<sequence>MVGLKPSEVPPTTAVKFLGAGTAACFADLLTFPLDTAKVRLQIQGENQATQAARRIQYRGVLGTILTMVRTEGPRSPYNGLVAGLQRQMSFASIRIGLYDSVKQFYTPKGSDHSSITTRILAGCTTGAMAVSCAQPTDVVKVRFQASIHLGAGSNRKYSGTMDAYRTIAREEGVRGLWKGTLPNITRNAIVNCAEMVTYDIIKEKLLDYHLLTDNFPCHLISAFGAGFCATVVASPVDVVKTRYMNSPPGQYCSPLDCMLKMVTQEGPTAFYKGFTPSFLRLGTWNVVMFVTYEQLKRALMKVQMLRESPF</sequence>
<dbReference type="EMBL" id="AB022020">
    <property type="protein sequence ID" value="BAA90458.1"/>
    <property type="molecule type" value="mRNA"/>
</dbReference>
<dbReference type="EMBL" id="AF201378">
    <property type="protein sequence ID" value="AAF08310.1"/>
    <property type="molecule type" value="mRNA"/>
</dbReference>
<dbReference type="RefSeq" id="NP_001003047.1">
    <property type="nucleotide sequence ID" value="NM_001003047.1"/>
</dbReference>
<dbReference type="FunCoup" id="Q9N2I9">
    <property type="interactions" value="4"/>
</dbReference>
<dbReference type="STRING" id="9615.ENSCAFP00000008310"/>
<dbReference type="PaxDb" id="9615-ENSCAFP00000008310"/>
<dbReference type="GeneID" id="403575"/>
<dbReference type="KEGG" id="cfa:403575"/>
<dbReference type="CTD" id="7352"/>
<dbReference type="InParanoid" id="Q9N2I9"/>
<dbReference type="OrthoDB" id="448427at2759"/>
<dbReference type="Proteomes" id="UP000002254">
    <property type="component" value="Unplaced"/>
</dbReference>
<dbReference type="Proteomes" id="UP000694429">
    <property type="component" value="Unplaced"/>
</dbReference>
<dbReference type="Proteomes" id="UP000694542">
    <property type="component" value="Unplaced"/>
</dbReference>
<dbReference type="Proteomes" id="UP000805418">
    <property type="component" value="Unplaced"/>
</dbReference>
<dbReference type="GO" id="GO:0005743">
    <property type="term" value="C:mitochondrial inner membrane"/>
    <property type="evidence" value="ECO:0000250"/>
    <property type="project" value="UniProtKB"/>
</dbReference>
<dbReference type="GO" id="GO:0017077">
    <property type="term" value="F:oxidative phosphorylation uncoupler activity"/>
    <property type="evidence" value="ECO:0000318"/>
    <property type="project" value="GO_Central"/>
</dbReference>
<dbReference type="GO" id="GO:1990845">
    <property type="term" value="P:adaptive thermogenesis"/>
    <property type="evidence" value="ECO:0000318"/>
    <property type="project" value="GO_Central"/>
</dbReference>
<dbReference type="GO" id="GO:1990542">
    <property type="term" value="P:mitochondrial transmembrane transport"/>
    <property type="evidence" value="ECO:0000318"/>
    <property type="project" value="GO_Central"/>
</dbReference>
<dbReference type="GO" id="GO:0009409">
    <property type="term" value="P:response to cold"/>
    <property type="evidence" value="ECO:0000318"/>
    <property type="project" value="GO_Central"/>
</dbReference>
<dbReference type="FunFam" id="1.50.40.10:FF:000008">
    <property type="entry name" value="Mitochondrial uncoupling protein 2"/>
    <property type="match status" value="1"/>
</dbReference>
<dbReference type="Gene3D" id="1.50.40.10">
    <property type="entry name" value="Mitochondrial carrier domain"/>
    <property type="match status" value="1"/>
</dbReference>
<dbReference type="InterPro" id="IPR002067">
    <property type="entry name" value="Mit_carrier"/>
</dbReference>
<dbReference type="InterPro" id="IPR050391">
    <property type="entry name" value="Mito_Metabolite_Transporter"/>
</dbReference>
<dbReference type="InterPro" id="IPR018108">
    <property type="entry name" value="Mitochondrial_sb/sol_carrier"/>
</dbReference>
<dbReference type="InterPro" id="IPR023395">
    <property type="entry name" value="Mt_carrier_dom_sf"/>
</dbReference>
<dbReference type="PANTHER" id="PTHR45618">
    <property type="entry name" value="MITOCHONDRIAL DICARBOXYLATE CARRIER-RELATED"/>
    <property type="match status" value="1"/>
</dbReference>
<dbReference type="Pfam" id="PF00153">
    <property type="entry name" value="Mito_carr"/>
    <property type="match status" value="3"/>
</dbReference>
<dbReference type="PRINTS" id="PR00784">
    <property type="entry name" value="MTUNCOUPLING"/>
</dbReference>
<dbReference type="SUPFAM" id="SSF103506">
    <property type="entry name" value="Mitochondrial carrier"/>
    <property type="match status" value="1"/>
</dbReference>
<dbReference type="PROSITE" id="PS50920">
    <property type="entry name" value="SOLCAR"/>
    <property type="match status" value="3"/>
</dbReference>